<keyword id="KW-0067">ATP-binding</keyword>
<keyword id="KW-0436">Ligase</keyword>
<keyword id="KW-0479">Metal-binding</keyword>
<keyword id="KW-0547">Nucleotide-binding</keyword>
<keyword id="KW-0671">Queuosine biosynthesis</keyword>
<keyword id="KW-1185">Reference proteome</keyword>
<keyword id="KW-0862">Zinc</keyword>
<evidence type="ECO:0000255" key="1">
    <source>
        <dbReference type="HAMAP-Rule" id="MF_01633"/>
    </source>
</evidence>
<accession>B2JJV1</accession>
<proteinExistence type="inferred from homology"/>
<dbReference type="EC" id="6.3.4.20" evidence="1"/>
<dbReference type="EMBL" id="CP001043">
    <property type="protein sequence ID" value="ACC69238.1"/>
    <property type="molecule type" value="Genomic_DNA"/>
</dbReference>
<dbReference type="RefSeq" id="WP_012399469.1">
    <property type="nucleotide sequence ID" value="NC_010622.1"/>
</dbReference>
<dbReference type="SMR" id="B2JJV1"/>
<dbReference type="STRING" id="391038.Bphy_0043"/>
<dbReference type="KEGG" id="bph:Bphy_0043"/>
<dbReference type="eggNOG" id="COG0603">
    <property type="taxonomic scope" value="Bacteria"/>
</dbReference>
<dbReference type="HOGENOM" id="CLU_081854_0_0_4"/>
<dbReference type="OrthoDB" id="9789567at2"/>
<dbReference type="UniPathway" id="UPA00391"/>
<dbReference type="Proteomes" id="UP000001192">
    <property type="component" value="Chromosome 1"/>
</dbReference>
<dbReference type="GO" id="GO:0005524">
    <property type="term" value="F:ATP binding"/>
    <property type="evidence" value="ECO:0007669"/>
    <property type="project" value="UniProtKB-UniRule"/>
</dbReference>
<dbReference type="GO" id="GO:0016879">
    <property type="term" value="F:ligase activity, forming carbon-nitrogen bonds"/>
    <property type="evidence" value="ECO:0007669"/>
    <property type="project" value="UniProtKB-UniRule"/>
</dbReference>
<dbReference type="GO" id="GO:0008270">
    <property type="term" value="F:zinc ion binding"/>
    <property type="evidence" value="ECO:0007669"/>
    <property type="project" value="UniProtKB-UniRule"/>
</dbReference>
<dbReference type="GO" id="GO:0008616">
    <property type="term" value="P:queuosine biosynthetic process"/>
    <property type="evidence" value="ECO:0007669"/>
    <property type="project" value="UniProtKB-UniRule"/>
</dbReference>
<dbReference type="CDD" id="cd01995">
    <property type="entry name" value="QueC-like"/>
    <property type="match status" value="1"/>
</dbReference>
<dbReference type="Gene3D" id="3.40.50.620">
    <property type="entry name" value="HUPs"/>
    <property type="match status" value="1"/>
</dbReference>
<dbReference type="HAMAP" id="MF_01633">
    <property type="entry name" value="QueC"/>
    <property type="match status" value="1"/>
</dbReference>
<dbReference type="InterPro" id="IPR018317">
    <property type="entry name" value="QueC"/>
</dbReference>
<dbReference type="InterPro" id="IPR014729">
    <property type="entry name" value="Rossmann-like_a/b/a_fold"/>
</dbReference>
<dbReference type="NCBIfam" id="TIGR00364">
    <property type="entry name" value="7-cyano-7-deazaguanine synthase QueC"/>
    <property type="match status" value="1"/>
</dbReference>
<dbReference type="PANTHER" id="PTHR42914">
    <property type="entry name" value="7-CYANO-7-DEAZAGUANINE SYNTHASE"/>
    <property type="match status" value="1"/>
</dbReference>
<dbReference type="PANTHER" id="PTHR42914:SF1">
    <property type="entry name" value="7-CYANO-7-DEAZAGUANINE SYNTHASE"/>
    <property type="match status" value="1"/>
</dbReference>
<dbReference type="Pfam" id="PF06508">
    <property type="entry name" value="QueC"/>
    <property type="match status" value="1"/>
</dbReference>
<dbReference type="PIRSF" id="PIRSF006293">
    <property type="entry name" value="ExsB"/>
    <property type="match status" value="1"/>
</dbReference>
<dbReference type="SUPFAM" id="SSF52402">
    <property type="entry name" value="Adenine nucleotide alpha hydrolases-like"/>
    <property type="match status" value="1"/>
</dbReference>
<feature type="chain" id="PRO_1000186568" description="7-cyano-7-deazaguanine synthase">
    <location>
        <begin position="1"/>
        <end position="243"/>
    </location>
</feature>
<feature type="binding site" evidence="1">
    <location>
        <begin position="14"/>
        <end position="24"/>
    </location>
    <ligand>
        <name>ATP</name>
        <dbReference type="ChEBI" id="CHEBI:30616"/>
    </ligand>
</feature>
<feature type="binding site" evidence="1">
    <location>
        <position position="202"/>
    </location>
    <ligand>
        <name>Zn(2+)</name>
        <dbReference type="ChEBI" id="CHEBI:29105"/>
    </ligand>
</feature>
<feature type="binding site" evidence="1">
    <location>
        <position position="217"/>
    </location>
    <ligand>
        <name>Zn(2+)</name>
        <dbReference type="ChEBI" id="CHEBI:29105"/>
    </ligand>
</feature>
<feature type="binding site" evidence="1">
    <location>
        <position position="220"/>
    </location>
    <ligand>
        <name>Zn(2+)</name>
        <dbReference type="ChEBI" id="CHEBI:29105"/>
    </ligand>
</feature>
<feature type="binding site" evidence="1">
    <location>
        <position position="223"/>
    </location>
    <ligand>
        <name>Zn(2+)</name>
        <dbReference type="ChEBI" id="CHEBI:29105"/>
    </ligand>
</feature>
<name>QUEC_PARP8</name>
<protein>
    <recommendedName>
        <fullName evidence="1">7-cyano-7-deazaguanine synthase</fullName>
        <ecNumber evidence="1">6.3.4.20</ecNumber>
    </recommendedName>
    <alternativeName>
        <fullName evidence="1">7-cyano-7-carbaguanine synthase</fullName>
    </alternativeName>
    <alternativeName>
        <fullName evidence="1">PreQ(0) synthase</fullName>
    </alternativeName>
    <alternativeName>
        <fullName evidence="1">Queuosine biosynthesis protein QueC</fullName>
    </alternativeName>
</protein>
<sequence>MTRKDAKSSALVLFSGGQDSATCLAWALDRYETVETLGFDYGQRHRVELECREGFRSAVARTFPEWGERLGDDHMIDLSVLGSISETAMTREIEIHAASNGLPNTFVPGRNLMFMTIAAAIAYRRGLRVLVGGMCETDFSGYPDCRDDTMKALQVALNLGMDSRFVLETPLMWIDKADTWRLAHELGGDELVELIRVETHTCYLGERAELHAWGFGCGECPACRLRKRGYEAYLSGEQVTEPA</sequence>
<gene>
    <name evidence="1" type="primary">queC</name>
    <name type="ordered locus">Bphy_0043</name>
</gene>
<reference key="1">
    <citation type="journal article" date="2014" name="Stand. Genomic Sci.">
        <title>Complete genome sequence of Burkholderia phymatum STM815(T), a broad host range and efficient nitrogen-fixing symbiont of Mimosa species.</title>
        <authorList>
            <person name="Moulin L."/>
            <person name="Klonowska A."/>
            <person name="Caroline B."/>
            <person name="Booth K."/>
            <person name="Vriezen J.A."/>
            <person name="Melkonian R."/>
            <person name="James E.K."/>
            <person name="Young J.P."/>
            <person name="Bena G."/>
            <person name="Hauser L."/>
            <person name="Land M."/>
            <person name="Kyrpides N."/>
            <person name="Bruce D."/>
            <person name="Chain P."/>
            <person name="Copeland A."/>
            <person name="Pitluck S."/>
            <person name="Woyke T."/>
            <person name="Lizotte-Waniewski M."/>
            <person name="Bristow J."/>
            <person name="Riley M."/>
        </authorList>
    </citation>
    <scope>NUCLEOTIDE SEQUENCE [LARGE SCALE GENOMIC DNA]</scope>
    <source>
        <strain>DSM 17167 / CIP 108236 / LMG 21445 / STM815</strain>
    </source>
</reference>
<organism>
    <name type="scientific">Paraburkholderia phymatum (strain DSM 17167 / CIP 108236 / LMG 21445 / STM815)</name>
    <name type="common">Burkholderia phymatum</name>
    <dbReference type="NCBI Taxonomy" id="391038"/>
    <lineage>
        <taxon>Bacteria</taxon>
        <taxon>Pseudomonadati</taxon>
        <taxon>Pseudomonadota</taxon>
        <taxon>Betaproteobacteria</taxon>
        <taxon>Burkholderiales</taxon>
        <taxon>Burkholderiaceae</taxon>
        <taxon>Paraburkholderia</taxon>
    </lineage>
</organism>
<comment type="function">
    <text evidence="1">Catalyzes the ATP-dependent conversion of 7-carboxy-7-deazaguanine (CDG) to 7-cyano-7-deazaguanine (preQ(0)).</text>
</comment>
<comment type="catalytic activity">
    <reaction evidence="1">
        <text>7-carboxy-7-deazaguanine + NH4(+) + ATP = 7-cyano-7-deazaguanine + ADP + phosphate + H2O + H(+)</text>
        <dbReference type="Rhea" id="RHEA:27982"/>
        <dbReference type="ChEBI" id="CHEBI:15377"/>
        <dbReference type="ChEBI" id="CHEBI:15378"/>
        <dbReference type="ChEBI" id="CHEBI:28938"/>
        <dbReference type="ChEBI" id="CHEBI:30616"/>
        <dbReference type="ChEBI" id="CHEBI:43474"/>
        <dbReference type="ChEBI" id="CHEBI:45075"/>
        <dbReference type="ChEBI" id="CHEBI:61036"/>
        <dbReference type="ChEBI" id="CHEBI:456216"/>
        <dbReference type="EC" id="6.3.4.20"/>
    </reaction>
</comment>
<comment type="cofactor">
    <cofactor evidence="1">
        <name>Zn(2+)</name>
        <dbReference type="ChEBI" id="CHEBI:29105"/>
    </cofactor>
    <text evidence="1">Binds 1 zinc ion per subunit.</text>
</comment>
<comment type="pathway">
    <text evidence="1">Purine metabolism; 7-cyano-7-deazaguanine biosynthesis.</text>
</comment>
<comment type="similarity">
    <text evidence="1">Belongs to the QueC family.</text>
</comment>